<dbReference type="PIR" id="A02627">
    <property type="entry name" value="HSFI3"/>
</dbReference>
<dbReference type="SMR" id="P84231"/>
<dbReference type="GO" id="GO:0000786">
    <property type="term" value="C:nucleosome"/>
    <property type="evidence" value="ECO:0007669"/>
    <property type="project" value="UniProtKB-KW"/>
</dbReference>
<dbReference type="GO" id="GO:0005634">
    <property type="term" value="C:nucleus"/>
    <property type="evidence" value="ECO:0007669"/>
    <property type="project" value="UniProtKB-SubCell"/>
</dbReference>
<dbReference type="GO" id="GO:0003677">
    <property type="term" value="F:DNA binding"/>
    <property type="evidence" value="ECO:0007669"/>
    <property type="project" value="UniProtKB-KW"/>
</dbReference>
<dbReference type="GO" id="GO:0046982">
    <property type="term" value="F:protein heterodimerization activity"/>
    <property type="evidence" value="ECO:0007669"/>
    <property type="project" value="InterPro"/>
</dbReference>
<dbReference type="GO" id="GO:0030527">
    <property type="term" value="F:structural constituent of chromatin"/>
    <property type="evidence" value="ECO:0007669"/>
    <property type="project" value="InterPro"/>
</dbReference>
<dbReference type="CDD" id="cd22911">
    <property type="entry name" value="HFD_H3"/>
    <property type="match status" value="1"/>
</dbReference>
<dbReference type="FunFam" id="1.10.20.10:FF:000078">
    <property type="entry name" value="Histone H3"/>
    <property type="match status" value="1"/>
</dbReference>
<dbReference type="FunFam" id="1.10.20.10:FF:000044">
    <property type="entry name" value="Histone H3.3"/>
    <property type="match status" value="1"/>
</dbReference>
<dbReference type="Gene3D" id="1.10.20.10">
    <property type="entry name" value="Histone, subunit A"/>
    <property type="match status" value="1"/>
</dbReference>
<dbReference type="InterPro" id="IPR009072">
    <property type="entry name" value="Histone-fold"/>
</dbReference>
<dbReference type="InterPro" id="IPR007125">
    <property type="entry name" value="Histone_H2A/H2B/H3"/>
</dbReference>
<dbReference type="InterPro" id="IPR000164">
    <property type="entry name" value="Histone_H3/CENP-A"/>
</dbReference>
<dbReference type="PANTHER" id="PTHR11426">
    <property type="entry name" value="HISTONE H3"/>
    <property type="match status" value="1"/>
</dbReference>
<dbReference type="Pfam" id="PF00125">
    <property type="entry name" value="Histone"/>
    <property type="match status" value="1"/>
</dbReference>
<dbReference type="PRINTS" id="PR00622">
    <property type="entry name" value="HISTONEH3"/>
</dbReference>
<dbReference type="SMART" id="SM00428">
    <property type="entry name" value="H3"/>
    <property type="match status" value="1"/>
</dbReference>
<dbReference type="SUPFAM" id="SSF47113">
    <property type="entry name" value="Histone-fold"/>
    <property type="match status" value="1"/>
</dbReference>
<dbReference type="PROSITE" id="PS00322">
    <property type="entry name" value="HISTONE_H3_1"/>
    <property type="match status" value="1"/>
</dbReference>
<dbReference type="PROSITE" id="PS00959">
    <property type="entry name" value="HISTONE_H3_2"/>
    <property type="match status" value="1"/>
</dbReference>
<keyword id="KW-0007">Acetylation</keyword>
<keyword id="KW-0013">ADP-ribosylation</keyword>
<keyword id="KW-0158">Chromosome</keyword>
<keyword id="KW-0164">Citrullination</keyword>
<keyword id="KW-0903">Direct protein sequencing</keyword>
<keyword id="KW-0238">DNA-binding</keyword>
<keyword id="KW-0379">Hydroxylation</keyword>
<keyword id="KW-0449">Lipoprotein</keyword>
<keyword id="KW-0488">Methylation</keyword>
<keyword id="KW-0544">Nucleosome core</keyword>
<keyword id="KW-0539">Nucleus</keyword>
<keyword id="KW-0564">Palmitate</keyword>
<keyword id="KW-0597">Phosphoprotein</keyword>
<keyword id="KW-0832">Ubl conjugation</keyword>
<sequence>MARTKQTARKSTGGKAPRKQLATKAARKSAPATGGVKKPHRYRPGTVALREIRRYQKSTELLIRKLPFQRLVREIAQDFKTDLRFQSSAVMALQEASEAYLVGLFEDTNLCAIHAKRVTIMPKDIQLARRIRGERA</sequence>
<protein>
    <recommendedName>
        <fullName>Histone H3.2</fullName>
    </recommendedName>
</protein>
<comment type="function">
    <text>Core component of nucleosome. Nucleosomes wrap and compact DNA into chromatin, limiting DNA accessibility to the cellular machineries which require DNA as a template. Histones thereby play a central role in transcription regulation, DNA repair, DNA replication and chromosomal stability. DNA accessibility is regulated via a complex set of post-translational modifications of histones, also called histone code, and nucleosome remodeling.</text>
</comment>
<comment type="subunit">
    <text>The nucleosome is a histone octamer containing two molecules each of H2A, H2B, H3 and H4 assembled in one H3-H4 heterotetramer and two H2A-H2B heterodimers. The octamer wraps approximately 147 bp of DNA.</text>
</comment>
<comment type="subcellular location">
    <subcellularLocation>
        <location>Nucleus</location>
    </subcellularLocation>
    <subcellularLocation>
        <location>Chromosome</location>
    </subcellularLocation>
</comment>
<comment type="developmental stage">
    <text>Expressed during S phase, then expression strongly decreases as cell division slows down during the process of differentiation.</text>
</comment>
<comment type="PTM">
    <text evidence="7">Acetylation is generally linked to gene activation. Acetylation on Lys-19 (H3K18ac) and Lys-24 (H3K24ac) favors methylation at Arg-18 (H3R17me). Acetylation at Lys-123 (H3K122ac) by EP300/p300 plays a central role in chromatin structure: localizes at the surface of the histone octamer and stimulates transcription, possibly by promoting nucleosome instability (By similarity).</text>
</comment>
<comment type="PTM">
    <text evidence="7">Asymmetric dimethylation at Arg-18 (H3R17me2a) is linked to gene activation. Asymmetric dimethylation at Arg-3 (H3R2me2a) by prmt6 is linked to gene repression and is mutually exclusive with H3 Lys-5 methylation (H3K4me2 and H3K4me3). H3R2me2a is present at the 3' of genes regardless of their transcription state and is enriched on inactive promoters, while it is absent on active promoters (By similarity).</text>
</comment>
<comment type="PTM">
    <text evidence="7">Methylation at Lys-5 (H3K4me), Lys-37 (H3K36me) and Lys-80 (H3K79me) are linked to gene activation. Methylation at Lys-5 (H3K4me) facilitates subsequent acetylation of H3 and H4. Methylation at Lys-80 (H3K79me) is associated with DNA double-strand break (DSB) responses and is a specific target for tp53bp1. Methylation at Lys-10 (H3K9me) and Lys-28 (H3K27me) are linked to gene repression. Methylation at Lys-10 (H3K9me) is a specific target for HP1 proteins (cbx1, cbx3 and cbx5) and prevents subsequent phosphorylation at Ser-11 (H3S10ph) and acetylation of H3 and H4. Methylation at Lys-5 (H3K4me) and Lys-80 (H3K79me) require preliminary monoubiquitination of H2B at 'Lys-120' (By similarity).</text>
</comment>
<comment type="PTM">
    <text evidence="7">Phosphorylated at Thr-4 (H3T3ph) by VRK1 (By similarity). Phosphorylated at Thr-4 (H3T3ph) by HASPIN during prophase and dephosphorylated during anaphase. Phosphorylation at Ser-11 (H3S10ph) by aurkb is crucial for chromosome condensation and cell-cycle progression during mitosis and meiosis. In addition phosphorylation at Ser-11 (H3S10ph) by rps6ka4 and rps6ka5 is important during interphase because it enables the transcription of genes following external stimulation, like mitogens, stress, growth factors or UV irradiation and result in the activation of genes, such as c-fos and c-jun. Phosphorylation at Ser-11 (H3S10ph), which is linked to gene activation, prevents methylation at Lys-10 (H3K9me) but facilitates acetylation of H3 and H4. Phosphorylation at Ser-11 (H3S10ph) by aurkb mediates the dissociation of HP1 proteins (cbx1, cbx3 and cbx5) from heterochromatin. Phosphorylation at Ser-11 (H3S10ph) is also an essential regulatory mechanism for neoplastic cell transformation. Phosphorylated at Ser-29 (H3S28ph) by map3k20 isoform 1, rps6ka5 or aurkb during mitosis or upon ultraviolet B irradiation. Phosphorylation at Thr-7 (H3T6ph) by prkcb is a specific tag for epigenetic transcriptional activation that prevents demethylation of Lys-5 (H3K4me) by lsd1/kdm1a. At centromeres, specifically phosphorylated at Thr-12 (H3T11ph) from prophase to early anaphase, by DAPK3 and PKN1. Phosphorylation at Thr-12 (H3T11ph) by PKN1 or isoform M2 of PKM (PKM2) is a specific tag for epigenetic transcriptional activation that promotes demethylation of Lys-10 (H3K9me) by kdm4c/jmjd2c. Phosphorylation at Tyr-42 (H3Y41ph) by jak2 promotes exclusion of cbx5 (HP1 alpha) from chromatin (By similarity).</text>
</comment>
<comment type="PTM">
    <text evidence="7">Monoubiquitinated by rag1 in lymphoid cells, monoubiquitination is required for V(D)J recombination.</text>
</comment>
<comment type="PTM">
    <text evidence="7">Lysine deamination at Lys-5 (H3K4all) to form allysine only takes place on H3K4me3 and results in gene repression.</text>
</comment>
<comment type="PTM">
    <text evidence="3">Butyrylation of histones marks active promoters and competes with histone acetylation. It is present during late spermatogenesis.</text>
</comment>
<comment type="PTM">
    <text evidence="7">Succinylation at Lys-80 (H3K79succ) by KAT2A takes place with a maximum frequency around the transcription start sites of genes. It gives a specific tag for epigenetic transcription activation. Desuccinylation at Lys-123 (H3K122succ) by SIRT7 in response to DNA damage promotes chromatin condensation and double-strand breaks (DSBs) repair.</text>
</comment>
<comment type="PTM">
    <text evidence="2">Serine ADP-ribosylation by PARP1 or PARP2 constitutes the primary form of ADP-ribosylation of proteins in response to DNA damage. Serine ADP-ribosylation at Ser-11 (H3S10ADPr) promotes recruitment of CHD1L. H3S10ADPr is mutually exclusive with phosphorylation at Ser-11 (H3S10ph) and impairs acetylation at Lys-10 (H3K9ac).</text>
</comment>
<comment type="PTM">
    <text evidence="7">Serotonylated by TGM2 at Gln-6 (H3Q5ser) during serotonergic neuron differentiation (By similarity). H3Q5ser is associated with trimethylation of Lys-5 (H3K4me3) and enhances general transcription factor IID (TFIID) complex-binding to H3K4me3, thereby facilitating transcription (By similarity).</text>
</comment>
<comment type="PTM">
    <text evidence="6 7">Dopaminylated by TGM2 at Gln-6 (H3Q5dop) in ventral tegmental area (VTA) neurons (By similarity). H3Q5dop mediates neurotransmission-independent role of nuclear dopamine by regulating relapse-related transcriptional plasticity in the reward system (By similarity).</text>
</comment>
<comment type="PTM">
    <text evidence="7">Lactylated in macrophages by EP300/P300 by using lactoyl-CoA directly derived from endogenous or exogenous lactate, leading to stimulates gene transcription.</text>
</comment>
<comment type="similarity">
    <text evidence="10">Belongs to the histone H3 family.</text>
</comment>
<feature type="initiator methionine" description="Removed" evidence="9">
    <location>
        <position position="1"/>
    </location>
</feature>
<feature type="chain" id="PRO_0000221262" description="Histone H3.2">
    <location>
        <begin position="2"/>
        <end position="136"/>
    </location>
</feature>
<feature type="region of interest" description="Disordered" evidence="8">
    <location>
        <begin position="1"/>
        <end position="43"/>
    </location>
</feature>
<feature type="modified residue" description="Asymmetric dimethylarginine; by PRMT6; alternate" evidence="7">
    <location>
        <position position="3"/>
    </location>
</feature>
<feature type="modified residue" description="Citrulline; alternate" evidence="7">
    <location>
        <position position="3"/>
    </location>
</feature>
<feature type="modified residue" description="Phosphothreonine; by HASPIN and VRK1" evidence="7">
    <location>
        <position position="4"/>
    </location>
</feature>
<feature type="modified residue" description="Allysine; alternate" evidence="7">
    <location>
        <position position="5"/>
    </location>
</feature>
<feature type="modified residue" description="N6,N6,N6-trimethyllysine; alternate" evidence="7">
    <location>
        <position position="5"/>
    </location>
</feature>
<feature type="modified residue" description="N6,N6-dimethyllysine; alternate" evidence="7">
    <location>
        <position position="5"/>
    </location>
</feature>
<feature type="modified residue" description="N6-(2-hydroxyisobutyryl)lysine; alternate" evidence="2">
    <location>
        <position position="5"/>
    </location>
</feature>
<feature type="modified residue" description="N6-acetyllysine; alternate" evidence="7">
    <location>
        <position position="5"/>
    </location>
</feature>
<feature type="modified residue" description="N6-crotonyllysine; alternate" evidence="7">
    <location>
        <position position="5"/>
    </location>
</feature>
<feature type="modified residue" description="N6-methyllysine; alternate" evidence="7">
    <location>
        <position position="5"/>
    </location>
</feature>
<feature type="modified residue" description="5-glutamyl dopamine; alternate" evidence="7">
    <location>
        <position position="6"/>
    </location>
</feature>
<feature type="modified residue" description="5-glutamyl serotonin; alternate" evidence="7">
    <location>
        <position position="6"/>
    </location>
</feature>
<feature type="modified residue" description="Phosphothreonine; by PKC" evidence="7">
    <location>
        <position position="7"/>
    </location>
</feature>
<feature type="modified residue" description="Citrulline; alternate" evidence="7">
    <location>
        <position position="9"/>
    </location>
</feature>
<feature type="modified residue" description="Symmetric dimethylarginine; by PRMT5; alternate" evidence="1">
    <location>
        <position position="9"/>
    </location>
</feature>
<feature type="modified residue" description="N6,N6,N6-trimethyllysine; alternate" evidence="7">
    <location>
        <position position="10"/>
    </location>
</feature>
<feature type="modified residue" description="N6,N6-dimethyllysine; alternate" evidence="7">
    <location>
        <position position="10"/>
    </location>
</feature>
<feature type="modified residue" description="N6-(2-hydroxyisobutyryl)lysine; alternate" evidence="2">
    <location>
        <position position="10"/>
    </location>
</feature>
<feature type="modified residue" description="N6-acetyllysine; alternate" evidence="7">
    <location>
        <position position="10"/>
    </location>
</feature>
<feature type="modified residue" description="N6-crotonyllysine; alternate" evidence="7">
    <location>
        <position position="10"/>
    </location>
</feature>
<feature type="modified residue" description="N6-lactoyllysine; alternate" evidence="7">
    <location>
        <position position="10"/>
    </location>
</feature>
<feature type="modified residue" description="N6-methyllysine; alternate" evidence="7">
    <location>
        <position position="10"/>
    </location>
</feature>
<feature type="modified residue" description="ADP-ribosylserine; alternate" evidence="2">
    <location>
        <position position="11"/>
    </location>
</feature>
<feature type="modified residue" description="Phosphoserine; alternate; by AURKB, AURKC, RPS6KA3, RPS6KA4 and RPS6KA5" evidence="7">
    <location>
        <position position="11"/>
    </location>
</feature>
<feature type="modified residue" description="Phosphothreonine; by PKC" evidence="7">
    <location>
        <position position="12"/>
    </location>
</feature>
<feature type="modified residue" description="N6-(2-hydroxyisobutyryl)lysine; alternate" evidence="2">
    <location>
        <position position="15"/>
    </location>
</feature>
<feature type="modified residue" description="N6-acetyllysine" evidence="7">
    <location>
        <position position="15"/>
    </location>
</feature>
<feature type="modified residue" description="N6-glutaryllysine; alternate" evidence="7">
    <location>
        <position position="15"/>
    </location>
</feature>
<feature type="modified residue" description="N6-lactoyllysine; alternate" evidence="4">
    <location>
        <position position="15"/>
    </location>
</feature>
<feature type="modified residue" description="Asymmetric dimethylarginine; by CARM1; alternate" evidence="7">
    <location>
        <position position="18"/>
    </location>
</feature>
<feature type="modified residue" description="Citrulline; alternate" evidence="7">
    <location>
        <position position="18"/>
    </location>
</feature>
<feature type="modified residue" description="N6-(2-hydroxyisobutyryl)lysine; alternate" evidence="2">
    <location>
        <position position="19"/>
    </location>
</feature>
<feature type="modified residue" description="N6-acetyllysine; alternate" evidence="7">
    <location>
        <position position="19"/>
    </location>
</feature>
<feature type="modified residue" description="N6-butyryllysine; alternate" evidence="3">
    <location>
        <position position="19"/>
    </location>
</feature>
<feature type="modified residue" description="N6-crotonyllysine; alternate" evidence="7">
    <location>
        <position position="19"/>
    </location>
</feature>
<feature type="modified residue" description="N6-glutaryllysine; alternate" evidence="7">
    <location>
        <position position="19"/>
    </location>
</feature>
<feature type="modified residue" description="N6-lactoyllysine; alternate" evidence="7">
    <location>
        <position position="19"/>
    </location>
</feature>
<feature type="modified residue" description="N6-methyllysine; alternate" evidence="7">
    <location>
        <position position="19"/>
    </location>
</feature>
<feature type="modified residue" description="N6-(2-hydroxyisobutyryl)lysine; alternate" evidence="2">
    <location>
        <position position="24"/>
    </location>
</feature>
<feature type="modified residue" description="N6-acetyllysine; alternate" evidence="7">
    <location>
        <position position="24"/>
    </location>
</feature>
<feature type="modified residue" description="N6-butyryllysine; alternate" evidence="3">
    <location>
        <position position="24"/>
    </location>
</feature>
<feature type="modified residue" description="N6-crotonyllysine; alternate" evidence="7">
    <location>
        <position position="24"/>
    </location>
</feature>
<feature type="modified residue" description="N6-glutaryllysine; alternate" evidence="7">
    <location>
        <position position="24"/>
    </location>
</feature>
<feature type="modified residue" description="N6-lactoyllysine; alternate" evidence="7">
    <location>
        <position position="24"/>
    </location>
</feature>
<feature type="modified residue" description="N6-methyllysine; alternate" evidence="7">
    <location>
        <position position="24"/>
    </location>
</feature>
<feature type="modified residue" description="Citrulline" evidence="7">
    <location>
        <position position="27"/>
    </location>
</feature>
<feature type="modified residue" description="N6,N6,N6-trimethyllysine; alternate" evidence="7">
    <location>
        <position position="28"/>
    </location>
</feature>
<feature type="modified residue" description="N6,N6-dimethyllysine; alternate" evidence="7">
    <location>
        <position position="28"/>
    </location>
</feature>
<feature type="modified residue" description="N6-(2-hydroxyisobutyryl)lysine; alternate" evidence="2">
    <location>
        <position position="28"/>
    </location>
</feature>
<feature type="modified residue" description="N6-acetyllysine; alternate" evidence="7">
    <location>
        <position position="28"/>
    </location>
</feature>
<feature type="modified residue" description="N6-crotonyllysine; alternate" evidence="7">
    <location>
        <position position="28"/>
    </location>
</feature>
<feature type="modified residue" description="N6-glutaryllysine; alternate" evidence="7">
    <location>
        <position position="28"/>
    </location>
</feature>
<feature type="modified residue" description="N6-lactoyllysine; alternate" evidence="7">
    <location>
        <position position="28"/>
    </location>
</feature>
<feature type="modified residue" description="N6-methyllysine; alternate" evidence="7">
    <location>
        <position position="28"/>
    </location>
</feature>
<feature type="modified residue" description="ADP-ribosylserine; alternate" evidence="2">
    <location>
        <position position="29"/>
    </location>
</feature>
<feature type="modified residue" description="Phosphoserine; alternate; by AURKB, AURKC and RPS6KA5" evidence="7">
    <location>
        <position position="29"/>
    </location>
</feature>
<feature type="modified residue" description="N6,N6,N6-trimethyllysine; alternate" evidence="7">
    <location>
        <position position="37"/>
    </location>
</feature>
<feature type="modified residue" description="N6,N6-dimethyllysine; alternate" evidence="7">
    <location>
        <position position="37"/>
    </location>
</feature>
<feature type="modified residue" description="N6-(2-hydroxyisobutyryl)lysine; alternate" evidence="2">
    <location>
        <position position="37"/>
    </location>
</feature>
<feature type="modified residue" description="N6-acetyllysine; alternate" evidence="7">
    <location>
        <position position="37"/>
    </location>
</feature>
<feature type="modified residue" description="N6-methyllysine; alternate" evidence="7">
    <location>
        <position position="37"/>
    </location>
</feature>
<feature type="modified residue" description="N6-methyllysine" evidence="2">
    <location>
        <position position="38"/>
    </location>
</feature>
<feature type="modified residue" description="Phosphotyrosine" evidence="7">
    <location>
        <position position="42"/>
    </location>
</feature>
<feature type="modified residue" description="N6,N6,N6-trimethyllysine; alternate" evidence="7">
    <location>
        <position position="57"/>
    </location>
</feature>
<feature type="modified residue" description="N6-(2-hydroxyisobutyryl)lysine; alternate" evidence="2">
    <location>
        <position position="57"/>
    </location>
</feature>
<feature type="modified residue" description="N6-acetyllysine; alternate" evidence="7">
    <location>
        <position position="57"/>
    </location>
</feature>
<feature type="modified residue" description="N6-crotonyllysine; alternate" evidence="7">
    <location>
        <position position="57"/>
    </location>
</feature>
<feature type="modified residue" description="N6-glutaryllysine; alternate" evidence="7">
    <location>
        <position position="57"/>
    </location>
</feature>
<feature type="modified residue" description="N6-lactoyllysine; alternate" evidence="4">
    <location>
        <position position="57"/>
    </location>
</feature>
<feature type="modified residue" description="N6-methyllysine; by EHMT2; alternate" evidence="7">
    <location>
        <position position="57"/>
    </location>
</feature>
<feature type="modified residue" description="N6-succinyllysine; alternate" evidence="4">
    <location>
        <position position="57"/>
    </location>
</feature>
<feature type="modified residue" description="Phosphoserine" evidence="7">
    <location>
        <position position="58"/>
    </location>
</feature>
<feature type="modified residue" description="N6-(2-hydroxyisobutyryl)lysine; alternate" evidence="2">
    <location>
        <position position="65"/>
    </location>
</feature>
<feature type="modified residue" description="N6-methyllysine; alternate" evidence="7">
    <location>
        <position position="65"/>
    </location>
</feature>
<feature type="modified residue" description="N6,N6,N6-trimethyllysine; alternate" evidence="4">
    <location>
        <position position="80"/>
    </location>
</feature>
<feature type="modified residue" description="N6,N6-dimethyllysine; alternate" evidence="7">
    <location>
        <position position="80"/>
    </location>
</feature>
<feature type="modified residue" description="N6-(2-hydroxyisobutyryl)lysine; alternate" evidence="2">
    <location>
        <position position="80"/>
    </location>
</feature>
<feature type="modified residue" description="N6-acetyllysine; alternate" evidence="7">
    <location>
        <position position="80"/>
    </location>
</feature>
<feature type="modified residue" description="N6-glutaryllysine; alternate" evidence="7">
    <location>
        <position position="80"/>
    </location>
</feature>
<feature type="modified residue" description="N6-lactoyllysine; alternate" evidence="7">
    <location>
        <position position="80"/>
    </location>
</feature>
<feature type="modified residue" description="N6-methyllysine; alternate" evidence="7">
    <location>
        <position position="80"/>
    </location>
</feature>
<feature type="modified residue" description="N6-succinyllysine; alternate" evidence="4">
    <location>
        <position position="80"/>
    </location>
</feature>
<feature type="modified residue" description="Phosphothreonine" evidence="7">
    <location>
        <position position="81"/>
    </location>
</feature>
<feature type="modified residue" description="Phosphoserine" evidence="5">
    <location>
        <position position="87"/>
    </location>
</feature>
<feature type="modified residue" description="Phosphothreonine" evidence="7">
    <location>
        <position position="108"/>
    </location>
</feature>
<feature type="modified residue" description="N6-acetyllysine; alternate" evidence="7">
    <location>
        <position position="116"/>
    </location>
</feature>
<feature type="modified residue" description="N6-glutaryllysine; alternate" evidence="7">
    <location>
        <position position="116"/>
    </location>
</feature>
<feature type="modified residue" description="N6-(2-hydroxyisobutyryl)lysine; alternate" evidence="2">
    <location>
        <position position="123"/>
    </location>
</feature>
<feature type="modified residue" description="N6-acetyllysine; alternate" evidence="7">
    <location>
        <position position="123"/>
    </location>
</feature>
<feature type="modified residue" description="N6-glutaryllysine; alternate" evidence="7">
    <location>
        <position position="123"/>
    </location>
</feature>
<feature type="modified residue" description="N6-methyllysine; alternate" evidence="7">
    <location>
        <position position="123"/>
    </location>
</feature>
<feature type="modified residue" description="N6-succinyllysine; alternate" evidence="7">
    <location>
        <position position="123"/>
    </location>
</feature>
<feature type="lipid moiety-binding region" description="S-palmitoyl cysteine" evidence="7">
    <location>
        <position position="111"/>
    </location>
</feature>
<proteinExistence type="evidence at protein level"/>
<accession>P84231</accession>
<accession>P02295</accession>
<accession>P02297</accession>
<accession>P16105</accession>
<accession>P17269</accession>
<accession>P17320</accession>
<name>H32_ICTBU</name>
<organism>
    <name type="scientific">Ictiobus bubalus</name>
    <name type="common">Smallmouth buffalo fish</name>
    <name type="synonym">Catostomus bubalus</name>
    <dbReference type="NCBI Taxonomy" id="7973"/>
    <lineage>
        <taxon>Eukaryota</taxon>
        <taxon>Metazoa</taxon>
        <taxon>Chordata</taxon>
        <taxon>Craniata</taxon>
        <taxon>Vertebrata</taxon>
        <taxon>Euteleostomi</taxon>
        <taxon>Actinopterygii</taxon>
        <taxon>Neopterygii</taxon>
        <taxon>Teleostei</taxon>
        <taxon>Ostariophysi</taxon>
        <taxon>Cypriniformes</taxon>
        <taxon>Catostomoidei</taxon>
        <taxon>Catostomidae</taxon>
        <taxon>Ictiobus</taxon>
    </lineage>
</organism>
<reference key="1">
    <citation type="journal article" date="1973" name="J. Biol. Chem.">
        <title>Histone 3. IV. Amino acid sequence of histone 3 of the testes of the carp, Letiobus bubalus.</title>
        <authorList>
            <person name="Hooper J.A."/>
            <person name="Smith E.L."/>
            <person name="Sommer K.R."/>
            <person name="Chalkley R."/>
        </authorList>
    </citation>
    <scope>PROTEIN SEQUENCE OF 2-136</scope>
</reference>
<evidence type="ECO:0000250" key="1"/>
<evidence type="ECO:0000250" key="2">
    <source>
        <dbReference type="UniProtKB" id="P68431"/>
    </source>
</evidence>
<evidence type="ECO:0000250" key="3">
    <source>
        <dbReference type="UniProtKB" id="P68433"/>
    </source>
</evidence>
<evidence type="ECO:0000250" key="4">
    <source>
        <dbReference type="UniProtKB" id="P84228"/>
    </source>
</evidence>
<evidence type="ECO:0000250" key="5">
    <source>
        <dbReference type="UniProtKB" id="P84243"/>
    </source>
</evidence>
<evidence type="ECO:0000250" key="6">
    <source>
        <dbReference type="UniProtKB" id="P84245"/>
    </source>
</evidence>
<evidence type="ECO:0000250" key="7">
    <source>
        <dbReference type="UniProtKB" id="Q71DI3"/>
    </source>
</evidence>
<evidence type="ECO:0000256" key="8">
    <source>
        <dbReference type="SAM" id="MobiDB-lite"/>
    </source>
</evidence>
<evidence type="ECO:0000269" key="9">
    <source>
    </source>
</evidence>
<evidence type="ECO:0000305" key="10"/>